<keyword id="KW-0145">Chemotaxis</keyword>
<keyword id="KW-0378">Hydrolase</keyword>
<keyword id="KW-1185">Reference proteome</keyword>
<proteinExistence type="inferred from homology"/>
<name>CHED_CLOBH</name>
<sequence length="162" mass="17318">MDIKEIKVGIADLNVGKNPDKIITVGLGSCIGIALYDGIKCIGGLSHIMLPDSTQFSKVTNPMKFADLAIPILVEKMEKLGARKNGLKAKICGGASMFNFSDKSMVMDIGNRNGKAVKEKLKELSIPLLAEDIGGNKGRTMIFDTSTGKVYIKTVGLGTKEI</sequence>
<evidence type="ECO:0000255" key="1">
    <source>
        <dbReference type="HAMAP-Rule" id="MF_01440"/>
    </source>
</evidence>
<reference key="1">
    <citation type="journal article" date="2007" name="Genome Res.">
        <title>Genome sequence of a proteolytic (Group I) Clostridium botulinum strain Hall A and comparative analysis of the clostridial genomes.</title>
        <authorList>
            <person name="Sebaihia M."/>
            <person name="Peck M.W."/>
            <person name="Minton N.P."/>
            <person name="Thomson N.R."/>
            <person name="Holden M.T.G."/>
            <person name="Mitchell W.J."/>
            <person name="Carter A.T."/>
            <person name="Bentley S.D."/>
            <person name="Mason D.R."/>
            <person name="Crossman L."/>
            <person name="Paul C.J."/>
            <person name="Ivens A."/>
            <person name="Wells-Bennik M.H.J."/>
            <person name="Davis I.J."/>
            <person name="Cerdeno-Tarraga A.M."/>
            <person name="Churcher C."/>
            <person name="Quail M.A."/>
            <person name="Chillingworth T."/>
            <person name="Feltwell T."/>
            <person name="Fraser A."/>
            <person name="Goodhead I."/>
            <person name="Hance Z."/>
            <person name="Jagels K."/>
            <person name="Larke N."/>
            <person name="Maddison M."/>
            <person name="Moule S."/>
            <person name="Mungall K."/>
            <person name="Norbertczak H."/>
            <person name="Rabbinowitsch E."/>
            <person name="Sanders M."/>
            <person name="Simmonds M."/>
            <person name="White B."/>
            <person name="Whithead S."/>
            <person name="Parkhill J."/>
        </authorList>
    </citation>
    <scope>NUCLEOTIDE SEQUENCE [LARGE SCALE GENOMIC DNA]</scope>
    <source>
        <strain>Hall / ATCC 3502 / NCTC 13319 / Type A</strain>
    </source>
</reference>
<reference key="2">
    <citation type="journal article" date="2007" name="PLoS ONE">
        <title>Analysis of the neurotoxin complex genes in Clostridium botulinum A1-A4 and B1 strains: BoNT/A3, /Ba4 and /B1 clusters are located within plasmids.</title>
        <authorList>
            <person name="Smith T.J."/>
            <person name="Hill K.K."/>
            <person name="Foley B.T."/>
            <person name="Detter J.C."/>
            <person name="Munk A.C."/>
            <person name="Bruce D.C."/>
            <person name="Doggett N.A."/>
            <person name="Smith L.A."/>
            <person name="Marks J.D."/>
            <person name="Xie G."/>
            <person name="Brettin T.S."/>
        </authorList>
    </citation>
    <scope>NUCLEOTIDE SEQUENCE [LARGE SCALE GENOMIC DNA]</scope>
    <source>
        <strain>Hall / ATCC 3502 / NCTC 13319 / Type A</strain>
    </source>
</reference>
<feature type="chain" id="PRO_1000073514" description="Probable chemoreceptor glutamine deamidase CheD">
    <location>
        <begin position="1"/>
        <end position="162"/>
    </location>
</feature>
<organism>
    <name type="scientific">Clostridium botulinum (strain Hall / ATCC 3502 / NCTC 13319 / Type A)</name>
    <dbReference type="NCBI Taxonomy" id="441771"/>
    <lineage>
        <taxon>Bacteria</taxon>
        <taxon>Bacillati</taxon>
        <taxon>Bacillota</taxon>
        <taxon>Clostridia</taxon>
        <taxon>Eubacteriales</taxon>
        <taxon>Clostridiaceae</taxon>
        <taxon>Clostridium</taxon>
    </lineage>
</organism>
<gene>
    <name evidence="1" type="primary">cheD</name>
    <name type="ordered locus">CBO2751</name>
    <name type="ordered locus">CLC_2625</name>
</gene>
<dbReference type="EC" id="3.5.1.44" evidence="1"/>
<dbReference type="EMBL" id="CP000727">
    <property type="protein sequence ID" value="ABS36747.1"/>
    <property type="molecule type" value="Genomic_DNA"/>
</dbReference>
<dbReference type="EMBL" id="AM412317">
    <property type="protein sequence ID" value="CAL84312.1"/>
    <property type="molecule type" value="Genomic_DNA"/>
</dbReference>
<dbReference type="RefSeq" id="WP_003359122.1">
    <property type="nucleotide sequence ID" value="NC_009698.1"/>
</dbReference>
<dbReference type="RefSeq" id="YP_001255250.1">
    <property type="nucleotide sequence ID" value="NC_009495.1"/>
</dbReference>
<dbReference type="RefSeq" id="YP_001388463.1">
    <property type="nucleotide sequence ID" value="NC_009698.1"/>
</dbReference>
<dbReference type="SMR" id="A5I5I5"/>
<dbReference type="GeneID" id="5186187"/>
<dbReference type="KEGG" id="cbh:CLC_2625"/>
<dbReference type="KEGG" id="cbo:CBO2751"/>
<dbReference type="PATRIC" id="fig|413999.7.peg.2734"/>
<dbReference type="HOGENOM" id="CLU_087854_2_0_9"/>
<dbReference type="PRO" id="PR:A5I5I5"/>
<dbReference type="Proteomes" id="UP000001986">
    <property type="component" value="Chromosome"/>
</dbReference>
<dbReference type="GO" id="GO:0050568">
    <property type="term" value="F:protein-glutamine glutaminase activity"/>
    <property type="evidence" value="ECO:0007669"/>
    <property type="project" value="UniProtKB-UniRule"/>
</dbReference>
<dbReference type="GO" id="GO:0006935">
    <property type="term" value="P:chemotaxis"/>
    <property type="evidence" value="ECO:0007669"/>
    <property type="project" value="UniProtKB-UniRule"/>
</dbReference>
<dbReference type="CDD" id="cd16352">
    <property type="entry name" value="CheD"/>
    <property type="match status" value="1"/>
</dbReference>
<dbReference type="Gene3D" id="3.30.1330.200">
    <property type="match status" value="1"/>
</dbReference>
<dbReference type="HAMAP" id="MF_01440">
    <property type="entry name" value="CheD"/>
    <property type="match status" value="1"/>
</dbReference>
<dbReference type="InterPro" id="IPR038592">
    <property type="entry name" value="CheD-like_sf"/>
</dbReference>
<dbReference type="InterPro" id="IPR005659">
    <property type="entry name" value="Chemorcpt_Glu_NH3ase_CheD"/>
</dbReference>
<dbReference type="InterPro" id="IPR011324">
    <property type="entry name" value="Cytotoxic_necrot_fac-like_cat"/>
</dbReference>
<dbReference type="NCBIfam" id="NF010015">
    <property type="entry name" value="PRK13490.1"/>
    <property type="match status" value="1"/>
</dbReference>
<dbReference type="PANTHER" id="PTHR35147">
    <property type="entry name" value="CHEMORECEPTOR GLUTAMINE DEAMIDASE CHED-RELATED"/>
    <property type="match status" value="1"/>
</dbReference>
<dbReference type="PANTHER" id="PTHR35147:SF1">
    <property type="entry name" value="CHEMORECEPTOR GLUTAMINE DEAMIDASE CHED-RELATED"/>
    <property type="match status" value="1"/>
</dbReference>
<dbReference type="Pfam" id="PF03975">
    <property type="entry name" value="CheD"/>
    <property type="match status" value="1"/>
</dbReference>
<dbReference type="SUPFAM" id="SSF64438">
    <property type="entry name" value="CNF1/YfiH-like putative cysteine hydrolases"/>
    <property type="match status" value="1"/>
</dbReference>
<comment type="function">
    <text evidence="1">Probably deamidates glutamine residues to glutamate on methyl-accepting chemotaxis receptors (MCPs), playing an important role in chemotaxis.</text>
</comment>
<comment type="catalytic activity">
    <reaction evidence="1">
        <text>L-glutaminyl-[protein] + H2O = L-glutamyl-[protein] + NH4(+)</text>
        <dbReference type="Rhea" id="RHEA:16441"/>
        <dbReference type="Rhea" id="RHEA-COMP:10207"/>
        <dbReference type="Rhea" id="RHEA-COMP:10208"/>
        <dbReference type="ChEBI" id="CHEBI:15377"/>
        <dbReference type="ChEBI" id="CHEBI:28938"/>
        <dbReference type="ChEBI" id="CHEBI:29973"/>
        <dbReference type="ChEBI" id="CHEBI:30011"/>
        <dbReference type="EC" id="3.5.1.44"/>
    </reaction>
</comment>
<comment type="similarity">
    <text evidence="1">Belongs to the CheD family.</text>
</comment>
<protein>
    <recommendedName>
        <fullName evidence="1">Probable chemoreceptor glutamine deamidase CheD</fullName>
        <ecNumber evidence="1">3.5.1.44</ecNumber>
    </recommendedName>
</protein>
<accession>A5I5I5</accession>
<accession>A7G6P8</accession>